<comment type="function">
    <text evidence="5">Catalyzes the isomerization-deamination of galactosamine 6-phosphate to form tagatofuranose 6-phosphate and ammonium ion.</text>
</comment>
<comment type="catalytic activity">
    <reaction evidence="5">
        <text>D-galactosamine 6-phosphate + H2O = D-tagatopyranose 1-phosphate + NH4(+)</text>
        <dbReference type="Rhea" id="RHEA:47680"/>
        <dbReference type="ChEBI" id="CHEBI:15377"/>
        <dbReference type="ChEBI" id="CHEBI:28938"/>
        <dbReference type="ChEBI" id="CHEBI:71674"/>
        <dbReference type="ChEBI" id="CHEBI:138150"/>
    </reaction>
</comment>
<comment type="induction">
    <text evidence="2">Induced by growth on N-acetyl-D-galactosamine.</text>
</comment>
<comment type="disruption phenotype">
    <text evidence="2">Deletion mutant does not grow on N-acetyl-D-galactosamine.</text>
</comment>
<comment type="similarity">
    <text evidence="4">Belongs to the SIS family. AgaS subfamily.</text>
</comment>
<organism>
    <name type="scientific">Escherichia coli O157:H7</name>
    <dbReference type="NCBI Taxonomy" id="83334"/>
    <lineage>
        <taxon>Bacteria</taxon>
        <taxon>Pseudomonadati</taxon>
        <taxon>Pseudomonadota</taxon>
        <taxon>Gammaproteobacteria</taxon>
        <taxon>Enterobacterales</taxon>
        <taxon>Enterobacteriaceae</taxon>
        <taxon>Escherichia</taxon>
    </lineage>
</organism>
<dbReference type="EC" id="3.5.99.-" evidence="5"/>
<dbReference type="EMBL" id="AE005174">
    <property type="protein sequence ID" value="AAG58268.1"/>
    <property type="molecule type" value="Genomic_DNA"/>
</dbReference>
<dbReference type="EMBL" id="BA000007">
    <property type="protein sequence ID" value="BAB37439.1"/>
    <property type="molecule type" value="Genomic_DNA"/>
</dbReference>
<dbReference type="PIR" id="H85975">
    <property type="entry name" value="H85975"/>
</dbReference>
<dbReference type="PIR" id="H91130">
    <property type="entry name" value="H91130"/>
</dbReference>
<dbReference type="RefSeq" id="NP_312043.1">
    <property type="nucleotide sequence ID" value="NC_002695.1"/>
</dbReference>
<dbReference type="RefSeq" id="WP_001114858.1">
    <property type="nucleotide sequence ID" value="NZ_VOAI01000009.1"/>
</dbReference>
<dbReference type="SMR" id="Q8XAC2"/>
<dbReference type="STRING" id="155864.Z4490"/>
<dbReference type="GeneID" id="916150"/>
<dbReference type="KEGG" id="ece:Z4490"/>
<dbReference type="KEGG" id="ecs:ECs_4016"/>
<dbReference type="PATRIC" id="fig|386585.9.peg.4192"/>
<dbReference type="eggNOG" id="COG2222">
    <property type="taxonomic scope" value="Bacteria"/>
</dbReference>
<dbReference type="HOGENOM" id="CLU_012520_0_0_6"/>
<dbReference type="OMA" id="KQQPELW"/>
<dbReference type="BioCyc" id="MetaCyc:MONOMER-18272"/>
<dbReference type="Proteomes" id="UP000000558">
    <property type="component" value="Chromosome"/>
</dbReference>
<dbReference type="Proteomes" id="UP000002519">
    <property type="component" value="Chromosome"/>
</dbReference>
<dbReference type="GO" id="GO:0005886">
    <property type="term" value="C:plasma membrane"/>
    <property type="evidence" value="ECO:0007669"/>
    <property type="project" value="TreeGrafter"/>
</dbReference>
<dbReference type="GO" id="GO:0097367">
    <property type="term" value="F:carbohydrate derivative binding"/>
    <property type="evidence" value="ECO:0007669"/>
    <property type="project" value="InterPro"/>
</dbReference>
<dbReference type="GO" id="GO:0016787">
    <property type="term" value="F:hydrolase activity"/>
    <property type="evidence" value="ECO:0007669"/>
    <property type="project" value="UniProtKB-KW"/>
</dbReference>
<dbReference type="GO" id="GO:0016853">
    <property type="term" value="F:isomerase activity"/>
    <property type="evidence" value="ECO:0007669"/>
    <property type="project" value="InterPro"/>
</dbReference>
<dbReference type="GO" id="GO:1901135">
    <property type="term" value="P:carbohydrate derivative metabolic process"/>
    <property type="evidence" value="ECO:0007669"/>
    <property type="project" value="InterPro"/>
</dbReference>
<dbReference type="GO" id="GO:0009401">
    <property type="term" value="P:phosphoenolpyruvate-dependent sugar phosphotransferase system"/>
    <property type="evidence" value="ECO:0007669"/>
    <property type="project" value="TreeGrafter"/>
</dbReference>
<dbReference type="CDD" id="cd05010">
    <property type="entry name" value="SIS_AgaS_like"/>
    <property type="match status" value="1"/>
</dbReference>
<dbReference type="CDD" id="cd05008">
    <property type="entry name" value="SIS_GlmS_GlmD_1"/>
    <property type="match status" value="1"/>
</dbReference>
<dbReference type="Gene3D" id="3.40.50.10490">
    <property type="entry name" value="Glucose-6-phosphate isomerase like protein, domain 1"/>
    <property type="match status" value="2"/>
</dbReference>
<dbReference type="InterPro" id="IPR050303">
    <property type="entry name" value="GatZ_KbaZ_carbometab"/>
</dbReference>
<dbReference type="InterPro" id="IPR035466">
    <property type="entry name" value="GlmS/AgaS_SIS"/>
</dbReference>
<dbReference type="InterPro" id="IPR035464">
    <property type="entry name" value="SIS_AgaS"/>
</dbReference>
<dbReference type="InterPro" id="IPR001347">
    <property type="entry name" value="SIS_dom"/>
</dbReference>
<dbReference type="InterPro" id="IPR046348">
    <property type="entry name" value="SIS_dom_sf"/>
</dbReference>
<dbReference type="InterPro" id="IPR014180">
    <property type="entry name" value="Sugar_isomerase_AgaS"/>
</dbReference>
<dbReference type="NCBIfam" id="TIGR02815">
    <property type="entry name" value="agaS_fam"/>
    <property type="match status" value="1"/>
</dbReference>
<dbReference type="PANTHER" id="PTHR32502:SF3">
    <property type="entry name" value="D-GALACTOSAMINE-6-PHOSPHATE DEAMINASE AGAS-RELATED"/>
    <property type="match status" value="1"/>
</dbReference>
<dbReference type="PANTHER" id="PTHR32502">
    <property type="entry name" value="N-ACETYLGALACTOSAMINE PERMEASE II COMPONENT-RELATED"/>
    <property type="match status" value="1"/>
</dbReference>
<dbReference type="Pfam" id="PF01380">
    <property type="entry name" value="SIS"/>
    <property type="match status" value="2"/>
</dbReference>
<dbReference type="SUPFAM" id="SSF53697">
    <property type="entry name" value="SIS domain"/>
    <property type="match status" value="1"/>
</dbReference>
<dbReference type="PROSITE" id="PS51464">
    <property type="entry name" value="SIS"/>
    <property type="match status" value="2"/>
</dbReference>
<accession>Q8XAC2</accession>
<accession>Q7AAK2</accession>
<name>AGAS_ECO57</name>
<gene>
    <name evidence="3" type="primary">agaS</name>
    <name evidence="7" type="ordered locus">ECs4016</name>
    <name evidence="6" type="ordered locus">Z4490</name>
</gene>
<reference key="1">
    <citation type="journal article" date="2001" name="Nature">
        <title>Genome sequence of enterohaemorrhagic Escherichia coli O157:H7.</title>
        <authorList>
            <person name="Perna N.T."/>
            <person name="Plunkett G. III"/>
            <person name="Burland V."/>
            <person name="Mau B."/>
            <person name="Glasner J.D."/>
            <person name="Rose D.J."/>
            <person name="Mayhew G.F."/>
            <person name="Evans P.S."/>
            <person name="Gregor J."/>
            <person name="Kirkpatrick H.A."/>
            <person name="Posfai G."/>
            <person name="Hackett J."/>
            <person name="Klink S."/>
            <person name="Boutin A."/>
            <person name="Shao Y."/>
            <person name="Miller L."/>
            <person name="Grotbeck E.J."/>
            <person name="Davis N.W."/>
            <person name="Lim A."/>
            <person name="Dimalanta E.T."/>
            <person name="Potamousis K."/>
            <person name="Apodaca J."/>
            <person name="Anantharaman T.S."/>
            <person name="Lin J."/>
            <person name="Yen G."/>
            <person name="Schwartz D.C."/>
            <person name="Welch R.A."/>
            <person name="Blattner F.R."/>
        </authorList>
    </citation>
    <scope>NUCLEOTIDE SEQUENCE [LARGE SCALE GENOMIC DNA]</scope>
    <source>
        <strain>O157:H7 / EDL933 / ATCC 700927 / EHEC</strain>
    </source>
</reference>
<reference key="2">
    <citation type="journal article" date="2001" name="DNA Res.">
        <title>Complete genome sequence of enterohemorrhagic Escherichia coli O157:H7 and genomic comparison with a laboratory strain K-12.</title>
        <authorList>
            <person name="Hayashi T."/>
            <person name="Makino K."/>
            <person name="Ohnishi M."/>
            <person name="Kurokawa K."/>
            <person name="Ishii K."/>
            <person name="Yokoyama K."/>
            <person name="Han C.-G."/>
            <person name="Ohtsubo E."/>
            <person name="Nakayama K."/>
            <person name="Murata T."/>
            <person name="Tanaka M."/>
            <person name="Tobe T."/>
            <person name="Iida T."/>
            <person name="Takami H."/>
            <person name="Honda T."/>
            <person name="Sasakawa C."/>
            <person name="Ogasawara N."/>
            <person name="Yasunaga T."/>
            <person name="Kuhara S."/>
            <person name="Shiba T."/>
            <person name="Hattori M."/>
            <person name="Shinagawa H."/>
        </authorList>
    </citation>
    <scope>NUCLEOTIDE SEQUENCE [LARGE SCALE GENOMIC DNA]</scope>
    <source>
        <strain>O157:H7 / Sakai / RIMD 0509952 / EHEC</strain>
    </source>
</reference>
<reference key="3">
    <citation type="journal article" date="2013" name="BMC Microbiol.">
        <title>Genetic analysis of the roles of agaA, agaI, and agaS genes in the N-acetyl-D-galactosamine and D-galactosamine catabolic pathways in Escherichia coli strains O157:H7 and C.</title>
        <authorList>
            <person name="Hu Z."/>
            <person name="Patel I.R."/>
            <person name="Mukherjee A."/>
        </authorList>
    </citation>
    <scope>FUNCTION</scope>
    <scope>CATALYTIC ACTIVITY</scope>
    <scope>INDUCTION</scope>
    <scope>DISRUPTION PHENOTYPE</scope>
    <source>
        <strain>O157:H7 / EDL933 / ATCC 700927 / EHEC</strain>
    </source>
</reference>
<protein>
    <recommendedName>
        <fullName evidence="4">D-galactosamine-6-phosphate deaminase AgaS</fullName>
        <ecNumber evidence="5">3.5.99.-</ecNumber>
    </recommendedName>
    <alternativeName>
        <fullName evidence="3">Gam-6-P deaminase/isomerase</fullName>
    </alternativeName>
</protein>
<feature type="chain" id="PRO_0000441911" description="D-galactosamine-6-phosphate deaminase AgaS">
    <location>
        <begin position="1"/>
        <end position="384"/>
    </location>
</feature>
<feature type="domain" description="SIS 1" evidence="1">
    <location>
        <begin position="45"/>
        <end position="197"/>
    </location>
</feature>
<feature type="domain" description="SIS 2" evidence="1">
    <location>
        <begin position="215"/>
        <end position="364"/>
    </location>
</feature>
<keyword id="KW-0119">Carbohydrate metabolism</keyword>
<keyword id="KW-0378">Hydrolase</keyword>
<keyword id="KW-1185">Reference proteome</keyword>
<keyword id="KW-0677">Repeat</keyword>
<proteinExistence type="evidence at protein level"/>
<evidence type="ECO:0000255" key="1">
    <source>
        <dbReference type="PROSITE-ProRule" id="PRU00797"/>
    </source>
</evidence>
<evidence type="ECO:0000269" key="2">
    <source>
    </source>
</evidence>
<evidence type="ECO:0000303" key="3">
    <source>
    </source>
</evidence>
<evidence type="ECO:0000305" key="4"/>
<evidence type="ECO:0000305" key="5">
    <source>
    </source>
</evidence>
<evidence type="ECO:0000312" key="6">
    <source>
        <dbReference type="EMBL" id="AAG58268.1"/>
    </source>
</evidence>
<evidence type="ECO:0000312" key="7">
    <source>
        <dbReference type="EMBL" id="BAB37439.1"/>
    </source>
</evidence>
<sequence>MPENYTPAAAATGTWTEEEIRHQPRAWIRSLTNIDALHSALNNFLEPLLRKENLRIILTGAGTSAFIGDIIAPWLASHTGKNFSAVPTTDLVTNPMDYLNPAHPLLLISFGRSGNSPESVAAVELANQFVPECYHLPITCNEAGALYQNAINSDNAFAVLMPAETHDRGFAMTSSITTMMASCLAVFAPETINSQTFRDVADRCQAILTSLGDFSEGVFGYAPWKRIVYLGSGGLQGAARESALKVLELTAGKLAAFYDSPTGFRHGPKSLVDNETLVVVFVSSHPYTRQYDLDLLAELHRDNQAMRVIAIAAESSDIVAAGPHIILPPSRHFIDVEQAFCFLMYAQTFALMQSLHMGNTPDTPSASGTVNRVVQGVIIHPWQA</sequence>